<keyword id="KW-1185">Reference proteome</keyword>
<keyword id="KW-0687">Ribonucleoprotein</keyword>
<keyword id="KW-0689">Ribosomal protein</keyword>
<keyword id="KW-0694">RNA-binding</keyword>
<keyword id="KW-0699">rRNA-binding</keyword>
<accession>A8H4U3</accession>
<evidence type="ECO:0000255" key="1">
    <source>
        <dbReference type="HAMAP-Rule" id="MF_00382"/>
    </source>
</evidence>
<evidence type="ECO:0000305" key="2"/>
<organism>
    <name type="scientific">Shewanella pealeana (strain ATCC 700345 / ANG-SQ1)</name>
    <dbReference type="NCBI Taxonomy" id="398579"/>
    <lineage>
        <taxon>Bacteria</taxon>
        <taxon>Pseudomonadati</taxon>
        <taxon>Pseudomonadota</taxon>
        <taxon>Gammaproteobacteria</taxon>
        <taxon>Alteromonadales</taxon>
        <taxon>Shewanellaceae</taxon>
        <taxon>Shewanella</taxon>
    </lineage>
</organism>
<comment type="function">
    <text evidence="1">Binds directly to 23S ribosomal RNA and is necessary for the in vitro assembly process of the 50S ribosomal subunit. It is not involved in the protein synthesizing functions of that subunit.</text>
</comment>
<comment type="similarity">
    <text evidence="1">Belongs to the bacterial ribosomal protein bL20 family.</text>
</comment>
<name>RL20_SHEPA</name>
<dbReference type="EMBL" id="CP000851">
    <property type="protein sequence ID" value="ABV87580.1"/>
    <property type="molecule type" value="Genomic_DNA"/>
</dbReference>
<dbReference type="RefSeq" id="WP_012155496.1">
    <property type="nucleotide sequence ID" value="NC_009901.1"/>
</dbReference>
<dbReference type="SMR" id="A8H4U3"/>
<dbReference type="STRING" id="398579.Spea_2260"/>
<dbReference type="KEGG" id="spl:Spea_2260"/>
<dbReference type="eggNOG" id="COG0292">
    <property type="taxonomic scope" value="Bacteria"/>
</dbReference>
<dbReference type="HOGENOM" id="CLU_123265_0_1_6"/>
<dbReference type="OrthoDB" id="9808966at2"/>
<dbReference type="Proteomes" id="UP000002608">
    <property type="component" value="Chromosome"/>
</dbReference>
<dbReference type="GO" id="GO:1990904">
    <property type="term" value="C:ribonucleoprotein complex"/>
    <property type="evidence" value="ECO:0007669"/>
    <property type="project" value="UniProtKB-KW"/>
</dbReference>
<dbReference type="GO" id="GO:0005840">
    <property type="term" value="C:ribosome"/>
    <property type="evidence" value="ECO:0007669"/>
    <property type="project" value="UniProtKB-KW"/>
</dbReference>
<dbReference type="GO" id="GO:0019843">
    <property type="term" value="F:rRNA binding"/>
    <property type="evidence" value="ECO:0007669"/>
    <property type="project" value="UniProtKB-UniRule"/>
</dbReference>
<dbReference type="GO" id="GO:0003735">
    <property type="term" value="F:structural constituent of ribosome"/>
    <property type="evidence" value="ECO:0007669"/>
    <property type="project" value="InterPro"/>
</dbReference>
<dbReference type="GO" id="GO:0000027">
    <property type="term" value="P:ribosomal large subunit assembly"/>
    <property type="evidence" value="ECO:0007669"/>
    <property type="project" value="UniProtKB-UniRule"/>
</dbReference>
<dbReference type="GO" id="GO:0006412">
    <property type="term" value="P:translation"/>
    <property type="evidence" value="ECO:0007669"/>
    <property type="project" value="InterPro"/>
</dbReference>
<dbReference type="CDD" id="cd07026">
    <property type="entry name" value="Ribosomal_L20"/>
    <property type="match status" value="1"/>
</dbReference>
<dbReference type="FunFam" id="1.10.1900.20:FF:000001">
    <property type="entry name" value="50S ribosomal protein L20"/>
    <property type="match status" value="1"/>
</dbReference>
<dbReference type="Gene3D" id="6.10.160.10">
    <property type="match status" value="1"/>
</dbReference>
<dbReference type="Gene3D" id="1.10.1900.20">
    <property type="entry name" value="Ribosomal protein L20"/>
    <property type="match status" value="1"/>
</dbReference>
<dbReference type="HAMAP" id="MF_00382">
    <property type="entry name" value="Ribosomal_bL20"/>
    <property type="match status" value="1"/>
</dbReference>
<dbReference type="InterPro" id="IPR005813">
    <property type="entry name" value="Ribosomal_bL20"/>
</dbReference>
<dbReference type="InterPro" id="IPR049946">
    <property type="entry name" value="RIBOSOMAL_L20_CS"/>
</dbReference>
<dbReference type="InterPro" id="IPR035566">
    <property type="entry name" value="Ribosomal_protein_bL20_C"/>
</dbReference>
<dbReference type="NCBIfam" id="TIGR01032">
    <property type="entry name" value="rplT_bact"/>
    <property type="match status" value="1"/>
</dbReference>
<dbReference type="PANTHER" id="PTHR10986">
    <property type="entry name" value="39S RIBOSOMAL PROTEIN L20"/>
    <property type="match status" value="1"/>
</dbReference>
<dbReference type="Pfam" id="PF00453">
    <property type="entry name" value="Ribosomal_L20"/>
    <property type="match status" value="1"/>
</dbReference>
<dbReference type="PRINTS" id="PR00062">
    <property type="entry name" value="RIBOSOMALL20"/>
</dbReference>
<dbReference type="SUPFAM" id="SSF74731">
    <property type="entry name" value="Ribosomal protein L20"/>
    <property type="match status" value="1"/>
</dbReference>
<dbReference type="PROSITE" id="PS00937">
    <property type="entry name" value="RIBOSOMAL_L20"/>
    <property type="match status" value="1"/>
</dbReference>
<gene>
    <name evidence="1" type="primary">rplT</name>
    <name type="ordered locus">Spea_2260</name>
</gene>
<protein>
    <recommendedName>
        <fullName evidence="1">Large ribosomal subunit protein bL20</fullName>
    </recommendedName>
    <alternativeName>
        <fullName evidence="2">50S ribosomal protein L20</fullName>
    </alternativeName>
</protein>
<proteinExistence type="inferred from homology"/>
<feature type="chain" id="PRO_1000080096" description="Large ribosomal subunit protein bL20">
    <location>
        <begin position="1"/>
        <end position="119"/>
    </location>
</feature>
<reference key="1">
    <citation type="submission" date="2007-10" db="EMBL/GenBank/DDBJ databases">
        <title>Complete sequence of Shewanella pealeana ATCC 700345.</title>
        <authorList>
            <consortium name="US DOE Joint Genome Institute"/>
            <person name="Copeland A."/>
            <person name="Lucas S."/>
            <person name="Lapidus A."/>
            <person name="Barry K."/>
            <person name="Glavina del Rio T."/>
            <person name="Dalin E."/>
            <person name="Tice H."/>
            <person name="Pitluck S."/>
            <person name="Chertkov O."/>
            <person name="Brettin T."/>
            <person name="Bruce D."/>
            <person name="Detter J.C."/>
            <person name="Han C."/>
            <person name="Schmutz J."/>
            <person name="Larimer F."/>
            <person name="Land M."/>
            <person name="Hauser L."/>
            <person name="Kyrpides N."/>
            <person name="Kim E."/>
            <person name="Zhao J.-S.Z."/>
            <person name="Manno D."/>
            <person name="Hawari J."/>
            <person name="Richardson P."/>
        </authorList>
    </citation>
    <scope>NUCLEOTIDE SEQUENCE [LARGE SCALE GENOMIC DNA]</scope>
    <source>
        <strain>ATCC 700345 / ANG-SQ1</strain>
    </source>
</reference>
<sequence>MPRVKRGVTARARHKKVLKLAKGYYGARSRTYRVAVQAVTKAGQYAYRDRRQKKRQFRQLWIARINAASRQNGLSYSRFINGLKKASIEIDRKILADIAVFDKVVFATLVEKAKDALAK</sequence>